<dbReference type="EC" id="5.4.99.1" evidence="1"/>
<dbReference type="EMBL" id="AE005174">
    <property type="protein sequence ID" value="AAG55062.1"/>
    <property type="molecule type" value="Genomic_DNA"/>
</dbReference>
<dbReference type="EMBL" id="BA000007">
    <property type="protein sequence ID" value="BAB34185.1"/>
    <property type="molecule type" value="Genomic_DNA"/>
</dbReference>
<dbReference type="PIR" id="B85575">
    <property type="entry name" value="B85575"/>
</dbReference>
<dbReference type="PIR" id="B90724">
    <property type="entry name" value="B90724"/>
</dbReference>
<dbReference type="RefSeq" id="NP_308789.1">
    <property type="nucleotide sequence ID" value="NC_002695.1"/>
</dbReference>
<dbReference type="RefSeq" id="WP_000423320.1">
    <property type="nucleotide sequence ID" value="NZ_VOAI01000019.1"/>
</dbReference>
<dbReference type="SMR" id="Q8X987"/>
<dbReference type="STRING" id="155864.Z0893"/>
<dbReference type="KEGG" id="ece:Z0893"/>
<dbReference type="KEGG" id="ecs:ECs_0762"/>
<dbReference type="PATRIC" id="fig|386585.9.peg.881"/>
<dbReference type="eggNOG" id="COG4865">
    <property type="taxonomic scope" value="Bacteria"/>
</dbReference>
<dbReference type="HOGENOM" id="CLU_029922_0_0_6"/>
<dbReference type="OMA" id="WMGGFPQ"/>
<dbReference type="UniPathway" id="UPA00561">
    <property type="reaction ID" value="UER00617"/>
</dbReference>
<dbReference type="Proteomes" id="UP000000558">
    <property type="component" value="Chromosome"/>
</dbReference>
<dbReference type="Proteomes" id="UP000002519">
    <property type="component" value="Chromosome"/>
</dbReference>
<dbReference type="GO" id="GO:0031419">
    <property type="term" value="F:cobalamin binding"/>
    <property type="evidence" value="ECO:0007669"/>
    <property type="project" value="UniProtKB-KW"/>
</dbReference>
<dbReference type="GO" id="GO:0050097">
    <property type="term" value="F:methylaspartate mutase activity"/>
    <property type="evidence" value="ECO:0007669"/>
    <property type="project" value="UniProtKB-UniRule"/>
</dbReference>
<dbReference type="GO" id="GO:0019670">
    <property type="term" value="P:anaerobic glutamate catabolic process"/>
    <property type="evidence" value="ECO:0007669"/>
    <property type="project" value="InterPro"/>
</dbReference>
<dbReference type="GO" id="GO:0019553">
    <property type="term" value="P:glutamate catabolic process via L-citramalate"/>
    <property type="evidence" value="ECO:0007669"/>
    <property type="project" value="UniProtKB-UniRule"/>
</dbReference>
<dbReference type="CDD" id="cd00245">
    <property type="entry name" value="Glm_e"/>
    <property type="match status" value="1"/>
</dbReference>
<dbReference type="Gene3D" id="3.90.970.10">
    <property type="match status" value="1"/>
</dbReference>
<dbReference type="Gene3D" id="3.20.20.240">
    <property type="entry name" value="Methylmalonyl-CoA mutase"/>
    <property type="match status" value="1"/>
</dbReference>
<dbReference type="HAMAP" id="MF_01923">
    <property type="entry name" value="Me_Asp_mutase_E"/>
    <property type="match status" value="1"/>
</dbReference>
<dbReference type="InterPro" id="IPR016176">
    <property type="entry name" value="Cbl-dep_enz_cat"/>
</dbReference>
<dbReference type="InterPro" id="IPR006396">
    <property type="entry name" value="Glu_mut_E"/>
</dbReference>
<dbReference type="InterPro" id="IPR014714">
    <property type="entry name" value="Glu_mut_E_C_dom_sf"/>
</dbReference>
<dbReference type="NCBIfam" id="TIGR01503">
    <property type="entry name" value="MthylAspMut_E"/>
    <property type="match status" value="1"/>
</dbReference>
<dbReference type="Pfam" id="PF06368">
    <property type="entry name" value="Met_asp_mut_E"/>
    <property type="match status" value="1"/>
</dbReference>
<dbReference type="PIRSF" id="PIRSF001495">
    <property type="entry name" value="Met_asp_mut_epsi"/>
    <property type="match status" value="1"/>
</dbReference>
<dbReference type="SUPFAM" id="SSF51703">
    <property type="entry name" value="Cobalamin (vitamin B12)-dependent enzymes"/>
    <property type="match status" value="1"/>
</dbReference>
<reference key="1">
    <citation type="journal article" date="1999" name="Genes Genet. Syst.">
        <title>Complete nucleotide sequence of the prophage VT2-Sakai carrying the verotoxin 2 genes of the enterohemorrhagic Escherichia coli O157:H7 derived from the Sakai outbreak.</title>
        <authorList>
            <person name="Makino K."/>
            <person name="Yokoyama K."/>
            <person name="Kubota Y."/>
            <person name="Yutsudo C.H."/>
            <person name="Kimura S."/>
            <person name="Kurokawa K."/>
            <person name="Ishii K."/>
            <person name="Hattori M."/>
            <person name="Tatsuno I."/>
            <person name="Abe H."/>
            <person name="Iida T."/>
            <person name="Yamamoto K."/>
            <person name="Ohnishi M."/>
            <person name="Hayashi T."/>
            <person name="Yasunaga T."/>
            <person name="Honda T."/>
            <person name="Sasakawa C."/>
            <person name="Shinagawa H."/>
        </authorList>
    </citation>
    <scope>NUCLEOTIDE SEQUENCE [GENOMIC DNA]</scope>
    <source>
        <strain>O157:H7 / Sakai / RIMD 0509952 / EHEC</strain>
    </source>
</reference>
<reference key="2">
    <citation type="journal article" date="2000" name="Gene">
        <title>Complete nucleotide sequence of the prophage VT1-Sakai carrying the Shiga toxin 1 genes of the enterohemorrhagic Escherichia coli O157:H7 strain derived from the Sakai outbreak.</title>
        <authorList>
            <person name="Yokoyama K."/>
            <person name="Makino K."/>
            <person name="Kubota Y."/>
            <person name="Watanabe M."/>
            <person name="Kimura S."/>
            <person name="Yutsudo C.H."/>
            <person name="Kurokawa K."/>
            <person name="Ishii K."/>
            <person name="Hattori M."/>
            <person name="Tatsuno I."/>
            <person name="Abe H."/>
            <person name="Yoh M."/>
            <person name="Iida T."/>
            <person name="Ohnishi M."/>
            <person name="Hayashi T."/>
            <person name="Yasunaga T."/>
            <person name="Honda T."/>
            <person name="Sasakawa C."/>
            <person name="Shinagawa H."/>
        </authorList>
    </citation>
    <scope>NUCLEOTIDE SEQUENCE [GENOMIC DNA]</scope>
    <source>
        <strain>O157:H7 / Sakai / RIMD 0509952 / EHEC</strain>
    </source>
</reference>
<reference key="3">
    <citation type="journal article" date="2000" name="Syst. Appl. Microbiol.">
        <title>Comparative analysis of the whole set of rRNA operons between an enterohemorrhagic Escherichia coli O157:H7 Sakai strain and an Escherichia coli K-12 strain MG1655.</title>
        <authorList>
            <person name="Ohnishi M."/>
            <person name="Murata T."/>
            <person name="Nakayama K."/>
            <person name="Kuhara S."/>
            <person name="Hattori M."/>
            <person name="Kurokawa K."/>
            <person name="Yasunaga T."/>
            <person name="Yokoyama K."/>
            <person name="Makino K."/>
            <person name="Shinagawa H."/>
            <person name="Hayashi T."/>
        </authorList>
    </citation>
    <scope>NUCLEOTIDE SEQUENCE [GENOMIC DNA]</scope>
    <source>
        <strain>O157:H7 / Sakai / RIMD 0509952 / EHEC</strain>
    </source>
</reference>
<reference key="4">
    <citation type="journal article" date="2001" name="DNA Res.">
        <title>Complete genome sequence of enterohemorrhagic Escherichia coli O157:H7 and genomic comparison with a laboratory strain K-12.</title>
        <authorList>
            <person name="Hayashi T."/>
            <person name="Makino K."/>
            <person name="Ohnishi M."/>
            <person name="Kurokawa K."/>
            <person name="Ishii K."/>
            <person name="Yokoyama K."/>
            <person name="Han C.-G."/>
            <person name="Ohtsubo E."/>
            <person name="Nakayama K."/>
            <person name="Murata T."/>
            <person name="Tanaka M."/>
            <person name="Tobe T."/>
            <person name="Iida T."/>
            <person name="Takami H."/>
            <person name="Honda T."/>
            <person name="Sasakawa C."/>
            <person name="Ogasawara N."/>
            <person name="Yasunaga T."/>
            <person name="Kuhara S."/>
            <person name="Shiba T."/>
            <person name="Hattori M."/>
            <person name="Shinagawa H."/>
        </authorList>
    </citation>
    <scope>NUCLEOTIDE SEQUENCE [LARGE SCALE GENOMIC DNA]</scope>
    <source>
        <strain>O157:H7 / Sakai / RIMD 0509952 / EHEC</strain>
    </source>
</reference>
<reference key="5">
    <citation type="journal article" date="2001" name="Nature">
        <title>Genome sequence of enterohaemorrhagic Escherichia coli O157:H7.</title>
        <authorList>
            <person name="Perna N.T."/>
            <person name="Plunkett G. III"/>
            <person name="Burland V."/>
            <person name="Mau B."/>
            <person name="Glasner J.D."/>
            <person name="Rose D.J."/>
            <person name="Mayhew G.F."/>
            <person name="Evans P.S."/>
            <person name="Gregor J."/>
            <person name="Kirkpatrick H.A."/>
            <person name="Posfai G."/>
            <person name="Hackett J."/>
            <person name="Klink S."/>
            <person name="Boutin A."/>
            <person name="Shao Y."/>
            <person name="Miller L."/>
            <person name="Grotbeck E.J."/>
            <person name="Davis N.W."/>
            <person name="Lim A."/>
            <person name="Dimalanta E.T."/>
            <person name="Potamousis K."/>
            <person name="Apodaca J."/>
            <person name="Anantharaman T.S."/>
            <person name="Lin J."/>
            <person name="Yen G."/>
            <person name="Schwartz D.C."/>
            <person name="Welch R.A."/>
            <person name="Blattner F.R."/>
        </authorList>
    </citation>
    <scope>NUCLEOTIDE SEQUENCE [LARGE SCALE GENOMIC DNA]</scope>
    <source>
        <strain>O157:H7 / EDL933 / ATCC 700927 / EHEC</strain>
    </source>
</reference>
<sequence>MELRNKKLTHDEFMTERQQVLKTWETGKDVENFEDGVKYQQTIPEHKRFSLALLKADKEGKTLSQPRAGVALMDEHIELLKTLQEECDLLPSTIDAYTRLNRYEEAAVGIKKSIEAGTSKLNGLPVVNHGVAACRRLTETLQKPLQIRHGTPDARLLAEISMASGFTSYEGGGISYNIPYAKRVTLEKSIRDWQYCDRLMGMYEEHGIRINREPFGPLTGTLIPPFISHSIAIIEGLLALEQGVKSITVGYGQVGSLTQDVAAIQSLRELAHEYFQSYGYTDYELSTVFHQWMGGFPEDESKAFAIISWGAAVAGMSGATKVITKSPHEAWGIPTAAANIQGLKASRQMLNMVNEQKFPPCPAVELEIELIKSEVRAVLNKVFELGNGDIARGTVLAFEAGVLDVPFAPAACNAGKILPVRDNTGAIRVLEAGAVPLPKDILDLHHDYVAERARCEGRQPTFQMVVDDINAVSHSKLIGRP</sequence>
<accession>Q8X987</accession>
<accession>Q7AGJ4</accession>
<proteinExistence type="inferred from homology"/>
<name>GLME_ECO57</name>
<gene>
    <name evidence="1" type="primary">glmE</name>
    <name type="ordered locus">ECs0762</name>
    <name type="ordered locus">Z0893</name>
</gene>
<comment type="function">
    <text evidence="1">Catalyzes the carbon skeleton rearrangement of L-glutamate to L-threo-3-methylaspartate ((2S,3S)-3-methylaspartate).</text>
</comment>
<comment type="catalytic activity">
    <reaction evidence="1">
        <text>(2S,3S)-3-methyl-L-aspartate = L-glutamate</text>
        <dbReference type="Rhea" id="RHEA:12857"/>
        <dbReference type="ChEBI" id="CHEBI:29985"/>
        <dbReference type="ChEBI" id="CHEBI:58724"/>
        <dbReference type="EC" id="5.4.99.1"/>
    </reaction>
</comment>
<comment type="cofactor">
    <cofactor evidence="1">
        <name>adenosylcob(III)alamin</name>
        <dbReference type="ChEBI" id="CHEBI:18408"/>
    </cofactor>
</comment>
<comment type="pathway">
    <text evidence="1">Amino-acid degradation; L-glutamate degradation via mesaconate pathway; acetate and pyruvate from L-glutamate: step 1/4.</text>
</comment>
<comment type="subunit">
    <text evidence="1">Heterotetramer composed of 2 epsilon subunits (GlmE) and 2 sigma subunits (GlmS). GlmE exists as a homodimer and GlmS as a monomer.</text>
</comment>
<comment type="similarity">
    <text evidence="1">Belongs to the methylaspartate mutase GlmE subunit family.</text>
</comment>
<protein>
    <recommendedName>
        <fullName evidence="1">Glutamate mutase epsilon subunit</fullName>
        <ecNumber evidence="1">5.4.99.1</ecNumber>
    </recommendedName>
    <alternativeName>
        <fullName evidence="1">Glutamate mutase E chain</fullName>
    </alternativeName>
    <alternativeName>
        <fullName evidence="1">Glutamate mutase large subunit</fullName>
    </alternativeName>
    <alternativeName>
        <fullName evidence="1">Methylaspartate mutase</fullName>
    </alternativeName>
</protein>
<evidence type="ECO:0000255" key="1">
    <source>
        <dbReference type="HAMAP-Rule" id="MF_01923"/>
    </source>
</evidence>
<keyword id="KW-0846">Cobalamin</keyword>
<keyword id="KW-0170">Cobalt</keyword>
<keyword id="KW-0413">Isomerase</keyword>
<keyword id="KW-1185">Reference proteome</keyword>
<feature type="chain" id="PRO_0000429443" description="Glutamate mutase epsilon subunit">
    <location>
        <begin position="1"/>
        <end position="481"/>
    </location>
</feature>
<feature type="binding site" evidence="1">
    <location>
        <position position="67"/>
    </location>
    <ligand>
        <name>L-glutamate</name>
        <dbReference type="ChEBI" id="CHEBI:29985"/>
    </ligand>
</feature>
<feature type="binding site" evidence="1">
    <location>
        <position position="69"/>
    </location>
    <ligand>
        <name>adenosylcob(III)alamin</name>
        <dbReference type="ChEBI" id="CHEBI:18408"/>
    </ligand>
</feature>
<feature type="binding site" evidence="1">
    <location>
        <position position="99"/>
    </location>
    <ligand>
        <name>L-glutamate</name>
        <dbReference type="ChEBI" id="CHEBI:29985"/>
    </ligand>
</feature>
<feature type="binding site" evidence="1">
    <location>
        <position position="122"/>
    </location>
    <ligand>
        <name>adenosylcob(III)alamin</name>
        <dbReference type="ChEBI" id="CHEBI:18408"/>
    </ligand>
</feature>
<feature type="binding site" evidence="1">
    <location>
        <begin position="148"/>
        <end position="149"/>
    </location>
    <ligand>
        <name>L-glutamate</name>
        <dbReference type="ChEBI" id="CHEBI:29985"/>
    </ligand>
</feature>
<feature type="binding site" evidence="1">
    <location>
        <position position="170"/>
    </location>
    <ligand>
        <name>L-glutamate</name>
        <dbReference type="ChEBI" id="CHEBI:29985"/>
    </ligand>
</feature>
<feature type="binding site" evidence="1">
    <location>
        <position position="176"/>
    </location>
    <ligand>
        <name>L-glutamate</name>
        <dbReference type="ChEBI" id="CHEBI:29985"/>
    </ligand>
</feature>
<feature type="binding site" evidence="1">
    <location>
        <position position="179"/>
    </location>
    <ligand>
        <name>adenosylcob(III)alamin</name>
        <dbReference type="ChEBI" id="CHEBI:18408"/>
    </ligand>
</feature>
<feature type="binding site" evidence="1">
    <location>
        <position position="180"/>
    </location>
    <ligand>
        <name>L-glutamate</name>
        <dbReference type="ChEBI" id="CHEBI:29985"/>
    </ligand>
</feature>
<feature type="binding site" evidence="1">
    <location>
        <position position="296"/>
    </location>
    <ligand>
        <name>adenosylcob(III)alamin</name>
        <dbReference type="ChEBI" id="CHEBI:18408"/>
    </ligand>
</feature>
<feature type="binding site" evidence="1">
    <location>
        <position position="325"/>
    </location>
    <ligand>
        <name>adenosylcob(III)alamin</name>
        <dbReference type="ChEBI" id="CHEBI:18408"/>
    </ligand>
</feature>
<feature type="binding site" evidence="1">
    <location>
        <position position="329"/>
    </location>
    <ligand>
        <name>adenosylcob(III)alamin</name>
        <dbReference type="ChEBI" id="CHEBI:18408"/>
    </ligand>
</feature>
<feature type="binding site" evidence="1">
    <location>
        <position position="333"/>
    </location>
    <ligand>
        <name>adenosylcob(III)alamin</name>
        <dbReference type="ChEBI" id="CHEBI:18408"/>
    </ligand>
</feature>
<organism>
    <name type="scientific">Escherichia coli O157:H7</name>
    <dbReference type="NCBI Taxonomy" id="83334"/>
    <lineage>
        <taxon>Bacteria</taxon>
        <taxon>Pseudomonadati</taxon>
        <taxon>Pseudomonadota</taxon>
        <taxon>Gammaproteobacteria</taxon>
        <taxon>Enterobacterales</taxon>
        <taxon>Enterobacteriaceae</taxon>
        <taxon>Escherichia</taxon>
    </lineage>
</organism>